<sequence length="362" mass="40997">MESPAVTFTLAYVVFSVCFVFTPNEFHSAGITVQNLLSGWLGSEDVAFVHYHIRRSSATLLAHSLLPMGYFIGMCFAAPEKELYNVHKAADGWKVFVLMAVLLPIATSILAFYWSQKRWSNHPLAKTLAHHALPQSSWRAVASSINTEFRRIDKFATGAPSARVIVTDTWVMKVTTYKVDVAQQQDIHLTVTDSRQHELSPDSNTPVQFITIRVASINPRVKPFDIRLNSTEYGELREKLHAPIRNAANIVIHQTLGDMFLDTFRSLVEANHTYEISSNQELEPCIGCMQTNANIKLVKYCQEANEGECQQCYCRPMWCLTCMGKWFASRQDQQHPETWLSSQVPCPTCRAKFCIVDVCIVR</sequence>
<gene>
    <name type="primary">tmem129</name>
</gene>
<name>TM129_XENLA</name>
<keyword id="KW-0256">Endoplasmic reticulum</keyword>
<keyword id="KW-0472">Membrane</keyword>
<keyword id="KW-0479">Metal-binding</keyword>
<keyword id="KW-1185">Reference proteome</keyword>
<keyword id="KW-0808">Transferase</keyword>
<keyword id="KW-0812">Transmembrane</keyword>
<keyword id="KW-1133">Transmembrane helix</keyword>
<keyword id="KW-0833">Ubl conjugation pathway</keyword>
<keyword id="KW-0834">Unfolded protein response</keyword>
<keyword id="KW-0862">Zinc</keyword>
<keyword id="KW-0863">Zinc-finger</keyword>
<accession>Q6IR55</accession>
<comment type="function">
    <text evidence="1">E3 ubiquitin-protein ligase involved in ER-associated protein degradation, preferentially associates with the E2 enzyme UBE2J2.</text>
</comment>
<comment type="catalytic activity">
    <reaction>
        <text>S-ubiquitinyl-[E2 ubiquitin-conjugating enzyme]-L-cysteine + [acceptor protein]-L-lysine = [E2 ubiquitin-conjugating enzyme]-L-cysteine + N(6)-ubiquitinyl-[acceptor protein]-L-lysine.</text>
        <dbReference type="EC" id="2.3.2.27"/>
    </reaction>
</comment>
<comment type="pathway">
    <text>Protein modification; protein ubiquitination.</text>
</comment>
<comment type="subunit">
    <text evidence="1">Integral component of ER-resident dislocation complexes.</text>
</comment>
<comment type="subcellular location">
    <subcellularLocation>
        <location evidence="1">Endoplasmic reticulum membrane</location>
        <topology evidence="1">Multi-pass membrane protein</topology>
    </subcellularLocation>
</comment>
<comment type="domain">
    <text evidence="1">The RING-type zinc finger domain is responsible for E3 ubiquitin ligase activity.</text>
</comment>
<comment type="similarity">
    <text evidence="3">Belongs to the TMEM129 family.</text>
</comment>
<organism>
    <name type="scientific">Xenopus laevis</name>
    <name type="common">African clawed frog</name>
    <dbReference type="NCBI Taxonomy" id="8355"/>
    <lineage>
        <taxon>Eukaryota</taxon>
        <taxon>Metazoa</taxon>
        <taxon>Chordata</taxon>
        <taxon>Craniata</taxon>
        <taxon>Vertebrata</taxon>
        <taxon>Euteleostomi</taxon>
        <taxon>Amphibia</taxon>
        <taxon>Batrachia</taxon>
        <taxon>Anura</taxon>
        <taxon>Pipoidea</taxon>
        <taxon>Pipidae</taxon>
        <taxon>Xenopodinae</taxon>
        <taxon>Xenopus</taxon>
        <taxon>Xenopus</taxon>
    </lineage>
</organism>
<feature type="chain" id="PRO_0000291045" description="E3 ubiquitin-protein ligase TM129">
    <location>
        <begin position="1"/>
        <end position="362"/>
    </location>
</feature>
<feature type="topological domain" description="Lumenal" evidence="2">
    <location>
        <begin position="1"/>
        <end position="6"/>
    </location>
</feature>
<feature type="transmembrane region" description="Helical" evidence="2">
    <location>
        <begin position="7"/>
        <end position="27"/>
    </location>
</feature>
<feature type="topological domain" description="Cytoplasmic" evidence="2">
    <location>
        <begin position="28"/>
        <end position="56"/>
    </location>
</feature>
<feature type="transmembrane region" description="Helical" evidence="2">
    <location>
        <begin position="57"/>
        <end position="77"/>
    </location>
</feature>
<feature type="topological domain" description="Lumenal" evidence="2">
    <location>
        <begin position="78"/>
        <end position="94"/>
    </location>
</feature>
<feature type="transmembrane region" description="Helical" evidence="2">
    <location>
        <begin position="95"/>
        <end position="115"/>
    </location>
</feature>
<feature type="topological domain" description="Cytoplasmic" evidence="2">
    <location>
        <begin position="116"/>
        <end position="362"/>
    </location>
</feature>
<feature type="zinc finger region" description="RING-type; degenerate">
    <location>
        <begin position="285"/>
        <end position="350"/>
    </location>
</feature>
<reference key="1">
    <citation type="submission" date="2004-05" db="EMBL/GenBank/DDBJ databases">
        <authorList>
            <consortium name="NIH - Xenopus Gene Collection (XGC) project"/>
        </authorList>
    </citation>
    <scope>NUCLEOTIDE SEQUENCE [LARGE SCALE MRNA]</scope>
    <source>
        <tissue>Oocyte</tissue>
    </source>
</reference>
<proteinExistence type="evidence at transcript level"/>
<evidence type="ECO:0000250" key="1">
    <source>
        <dbReference type="UniProtKB" id="A0AVI4"/>
    </source>
</evidence>
<evidence type="ECO:0000255" key="2"/>
<evidence type="ECO:0000305" key="3"/>
<dbReference type="EC" id="2.3.2.27"/>
<dbReference type="EMBL" id="BC071045">
    <property type="protein sequence ID" value="AAH71045.1"/>
    <property type="molecule type" value="mRNA"/>
</dbReference>
<dbReference type="RefSeq" id="NP_001085030.1">
    <property type="nucleotide sequence ID" value="NM_001091561.1"/>
</dbReference>
<dbReference type="DNASU" id="432097"/>
<dbReference type="AGR" id="Xenbase:XB-GENE-6256270"/>
<dbReference type="Xenbase" id="XB-GENE-6256270">
    <property type="gene designation" value="tmem129.L"/>
</dbReference>
<dbReference type="UniPathway" id="UPA00143"/>
<dbReference type="Proteomes" id="UP000186698">
    <property type="component" value="Unplaced"/>
</dbReference>
<dbReference type="Bgee" id="432097">
    <property type="expression patterns" value="Expressed in egg cell and 19 other cell types or tissues"/>
</dbReference>
<dbReference type="GO" id="GO:0005783">
    <property type="term" value="C:endoplasmic reticulum"/>
    <property type="evidence" value="ECO:0000318"/>
    <property type="project" value="GO_Central"/>
</dbReference>
<dbReference type="GO" id="GO:0005789">
    <property type="term" value="C:endoplasmic reticulum membrane"/>
    <property type="evidence" value="ECO:0007669"/>
    <property type="project" value="UniProtKB-SubCell"/>
</dbReference>
<dbReference type="GO" id="GO:0061630">
    <property type="term" value="F:ubiquitin protein ligase activity"/>
    <property type="evidence" value="ECO:0000318"/>
    <property type="project" value="GO_Central"/>
</dbReference>
<dbReference type="GO" id="GO:0008270">
    <property type="term" value="F:zinc ion binding"/>
    <property type="evidence" value="ECO:0007669"/>
    <property type="project" value="UniProtKB-KW"/>
</dbReference>
<dbReference type="GO" id="GO:0016567">
    <property type="term" value="P:protein ubiquitination"/>
    <property type="evidence" value="ECO:0007669"/>
    <property type="project" value="UniProtKB-UniPathway"/>
</dbReference>
<dbReference type="GO" id="GO:0006986">
    <property type="term" value="P:response to unfolded protein"/>
    <property type="evidence" value="ECO:0007669"/>
    <property type="project" value="UniProtKB-KW"/>
</dbReference>
<dbReference type="InterPro" id="IPR018801">
    <property type="entry name" value="TM129"/>
</dbReference>
<dbReference type="PANTHER" id="PTHR31322">
    <property type="entry name" value="E3 UBIQUITIN-PROTEIN LIGASE TM129"/>
    <property type="match status" value="1"/>
</dbReference>
<dbReference type="PANTHER" id="PTHR31322:SF2">
    <property type="entry name" value="E3 UBIQUITIN-PROTEIN LIGASE TM129"/>
    <property type="match status" value="1"/>
</dbReference>
<dbReference type="Pfam" id="PF10272">
    <property type="entry name" value="Tmpp129"/>
    <property type="match status" value="1"/>
</dbReference>
<protein>
    <recommendedName>
        <fullName>E3 ubiquitin-protein ligase TM129</fullName>
        <ecNumber>2.3.2.27</ecNumber>
    </recommendedName>
    <alternativeName>
        <fullName evidence="3">RING-type E3 ubiquitin transferase TM129</fullName>
    </alternativeName>
</protein>